<comment type="function">
    <text evidence="2 3 12 13 14">Plasma membrane-associated small GTPase which cycles between an active GTP-bound and an inactive GDP-bound state (PubMed:24352656). In its active state binds to a variety of effector proteins to regulate cellular responses. Involved in epithelial cell polarization processes. Regulates the bipolar attachment of spindle microtubules to kinetochores before chromosome congression in metaphase. Regulates cell migration (By similarity). In neurons, plays a role in the extension and maintenance of the formation of filopodia, thin and actin-rich surface projections. Required for DOCK10-mediated spine formation in Purkinje cells and hippocampal neurons (PubMed:25851601). Facilitates filopodia formation upon DOCK11-activation (PubMed:22494997). Upon activation by CaMKII, modulates dendritic spine structural plasticity by relaying CaMKII transient activation to synapse-specific, long-term signaling (By similarity). Also plays a role in phagocytosis through organization of the F-actin cytoskeleton associated with forming phagocytic cups (By similarity). Upon activation by PLEKHG4B, involved in actin cytoskeletal remodeling during epithelial cell-cell junction formation (By similarity).</text>
</comment>
<comment type="catalytic activity">
    <reaction evidence="13 15">
        <text>GTP + H2O = GDP + phosphate + H(+)</text>
        <dbReference type="Rhea" id="RHEA:19669"/>
        <dbReference type="ChEBI" id="CHEBI:15377"/>
        <dbReference type="ChEBI" id="CHEBI:15378"/>
        <dbReference type="ChEBI" id="CHEBI:37565"/>
        <dbReference type="ChEBI" id="CHEBI:43474"/>
        <dbReference type="ChEBI" id="CHEBI:58189"/>
        <dbReference type="EC" id="3.6.5.2"/>
    </reaction>
    <physiologicalReaction direction="left-to-right" evidence="20 21">
        <dbReference type="Rhea" id="RHEA:19670"/>
    </physiologicalReaction>
</comment>
<comment type="activity regulation">
    <text evidence="8 11 13 15">Regulated by guanine nucleotide exchange factors (GEFs) which promote the exchange of bound GDP for free GTP, GTPase activating proteins (GAPs) which increase the GTP hydrolysis activity, and GDP dissociation inhibitors which inhibit the dissociation of the nucleotide from the GTPase. Inhibited by GAPs such as ARHGAP44 (PubMed:24352656, PubMed:26969129).</text>
</comment>
<comment type="subunit">
    <text evidence="2 5 6 7 8 9 10 11 17">Interacts with CDC42EP1, CDC42EP2, CDC42EP3, CDC42EP4, CDC42EP5, CDC42SE1, CDC42SE2, PARD6A, PARD6B and PARD6G (in a GTP-dependent manner) (PubMed:10490598, PubMed:10934474). Interacts with activated CSPG4 and with BAIAP2 (By similarity). Interacts with DOCK11/Zizimin2; the interaction activates CDC42 by exchanging GDP for GTP (PubMed:15710388, PubMed:16968698). Interacts with DOCK9; the interaction activates CDC42 by exchanging GDP for GTP (By similarity). Interacts with DOCK8 (via DHR-2 domain); the interaction activates CDC42 by exchanging GDP for GTP (PubMed:22461490). Interacts with IQGAP1 (PubMed:16968698). Interacts with NET1 and ARHGAP33/TCGAP (PubMed:12773384, PubMed:9535835). Part of a complex with PARD3, PARD6A or PARD6B and PRKCI or PRKCZ (PubMed:10934474). The GTP-bound form interacts with CCPG1 (PubMed:17000758). Interacts with USP6 (By similarity). Interacts with NEK6 (By similarity). Part of a collagen stimulated complex involved in cell migration composed of CDC42, CRK, TNK2 and BCAR1/p130cas (By similarity). Interacts with ITGB1BP1 (By similarity). Interacts with ARHGDIA; this interaction inactivates and stabilizes CDC42. Interacts with ARHGDIB; this maintains CDC42 in the inactive, GDP-bound form (By similarity). Interacts in (GTP-bound form) with FNBP1L and ABI1, but only in the presence of FNBP1L (By similarity). Interacts with MARCKS (PubMed:30185885). Interacts with CD151 and ITGB1 (By similarity).</text>
</comment>
<comment type="interaction">
    <interactant intactId="EBI-81763">
        <id>P60766</id>
    </interactant>
    <interactant intactId="EBI-457240">
        <id>O88643</id>
        <label>Pak1</label>
    </interactant>
    <organismsDiffer>false</organismsDiffer>
    <experiments>2</experiments>
</comment>
<comment type="interaction">
    <interactant intactId="EBI-81763">
        <id>P60766</id>
    </interactant>
    <interactant intactId="EBI-521920">
        <id>P63044</id>
        <label>Vamp2</label>
    </interactant>
    <organismsDiffer>false</organismsDiffer>
    <experiments>2</experiments>
</comment>
<comment type="interaction">
    <interactant intactId="EBI-81763">
        <id>P60766</id>
    </interactant>
    <interactant intactId="EBI-1307">
        <id>Q13153</id>
        <label>PAK1</label>
    </interactant>
    <organismsDiffer>true</organismsDiffer>
    <experiments>3</experiments>
</comment>
<comment type="subcellular location">
    <subcellularLocation>
        <location evidence="11 16">Cell membrane</location>
        <topology evidence="18">Lipid-anchor</topology>
        <orientation evidence="18">Cytoplasmic side</orientation>
    </subcellularLocation>
    <subcellularLocation>
        <location evidence="2">Midbody</location>
    </subcellularLocation>
    <subcellularLocation>
        <location evidence="2">Cytoplasm</location>
        <location evidence="2">Cytoskeleton</location>
        <location evidence="2">Microtubule organizing center</location>
        <location evidence="2">Centrosome</location>
    </subcellularLocation>
    <subcellularLocation>
        <location evidence="2">Cytoplasm</location>
        <location evidence="2">Cytoskeleton</location>
        <location evidence="2">Spindle</location>
    </subcellularLocation>
    <subcellularLocation>
        <location evidence="11">Cytoplasm</location>
    </subcellularLocation>
    <subcellularLocation>
        <location evidence="11">Cell projection</location>
        <location evidence="11">Lamellipodium membrane</location>
        <topology evidence="19">Peripheral membrane protein</topology>
        <orientation evidence="19">Cytoplasmic side</orientation>
    </subcellularLocation>
    <subcellularLocation>
        <location evidence="13">Cell projection</location>
        <location evidence="13">Dendrite</location>
    </subcellularLocation>
    <text evidence="2 11">Localizes to spindle during prometaphase cells (By similarity). Moves to the central spindle as cells progressed through anaphase to telophase. Localizes at the end of cytokinesis in the intercellular bridge formed between two daughter cells (By similarity). Its localization is regulated by the activities of guanine nucleotide exchange factor ECT2 and GTPase activating protein RACGAP1. Colocalizes with NEK6 in the centrosome (By similarity). In its active GTP-bound form localizes to the leading edge membrane of migrating dendritic cells (PubMed:22461490).</text>
</comment>
<comment type="alternative products">
    <event type="alternative splicing"/>
    <isoform>
        <id>P60766-2</id>
        <id>P21181-4</id>
        <name>2</name>
        <name>Placental</name>
        <sequence type="displayed"/>
    </isoform>
    <isoform>
        <id>P60766-1</id>
        <id>P21181-1</id>
        <name>1</name>
        <name>Brain</name>
        <sequence type="described" ref="VSP_040585 VSP_040586"/>
    </isoform>
</comment>
<comment type="PTM">
    <text evidence="1">Phosphorylated by SRC in an EGF-dependent manner, this stimulates the binding of the Rho-GDP dissociation inhibitor RhoGDI.</text>
</comment>
<comment type="similarity">
    <text evidence="18">Belongs to the small GTPase superfamily. Rho family. CDC42 subfamily.</text>
</comment>
<reference key="1">
    <citation type="journal article" date="1993" name="Nature">
        <title>Oncogene ect2 is related to regulators of small GTP-binding proteins.</title>
        <authorList>
            <person name="Miki T."/>
            <person name="Smith C.L."/>
            <person name="Long J.E."/>
            <person name="Eva A."/>
            <person name="Fleming T.P."/>
        </authorList>
    </citation>
    <scope>NUCLEOTIDE SEQUENCE [MRNA] (ISOFORM 2)</scope>
</reference>
<reference key="2">
    <citation type="journal article" date="1997" name="Biochim. Biophys. Acta">
        <title>Complete cDNAs for CDC42 from chicken cochlea and mouse liver.</title>
        <authorList>
            <person name="Gong T.W."/>
            <person name="Shin J.J."/>
            <person name="Burmeister M."/>
            <person name="Lomax M.I."/>
        </authorList>
    </citation>
    <scope>NUCLEOTIDE SEQUENCE [MRNA] (ISOFORM 2)</scope>
    <source>
        <tissue>Liver</tissue>
    </source>
</reference>
<reference key="3">
    <citation type="journal article" date="1996" name="Genomics">
        <title>Genomic organization and chromosomal location of murine Cdc42.</title>
        <authorList>
            <person name="Marks P.W."/>
            <person name="Kwiatkowski D.J."/>
        </authorList>
    </citation>
    <scope>NUCLEOTIDE SEQUENCE [GENOMIC DNA] (ISOFORM 1)</scope>
    <source>
        <strain>C57BL/6J</strain>
        <tissue>Brain</tissue>
    </source>
</reference>
<reference key="4">
    <citation type="journal article" date="2005" name="Science">
        <title>The transcriptional landscape of the mammalian genome.</title>
        <authorList>
            <person name="Carninci P."/>
            <person name="Kasukawa T."/>
            <person name="Katayama S."/>
            <person name="Gough J."/>
            <person name="Frith M.C."/>
            <person name="Maeda N."/>
            <person name="Oyama R."/>
            <person name="Ravasi T."/>
            <person name="Lenhard B."/>
            <person name="Wells C."/>
            <person name="Kodzius R."/>
            <person name="Shimokawa K."/>
            <person name="Bajic V.B."/>
            <person name="Brenner S.E."/>
            <person name="Batalov S."/>
            <person name="Forrest A.R."/>
            <person name="Zavolan M."/>
            <person name="Davis M.J."/>
            <person name="Wilming L.G."/>
            <person name="Aidinis V."/>
            <person name="Allen J.E."/>
            <person name="Ambesi-Impiombato A."/>
            <person name="Apweiler R."/>
            <person name="Aturaliya R.N."/>
            <person name="Bailey T.L."/>
            <person name="Bansal M."/>
            <person name="Baxter L."/>
            <person name="Beisel K.W."/>
            <person name="Bersano T."/>
            <person name="Bono H."/>
            <person name="Chalk A.M."/>
            <person name="Chiu K.P."/>
            <person name="Choudhary V."/>
            <person name="Christoffels A."/>
            <person name="Clutterbuck D.R."/>
            <person name="Crowe M.L."/>
            <person name="Dalla E."/>
            <person name="Dalrymple B.P."/>
            <person name="de Bono B."/>
            <person name="Della Gatta G."/>
            <person name="di Bernardo D."/>
            <person name="Down T."/>
            <person name="Engstrom P."/>
            <person name="Fagiolini M."/>
            <person name="Faulkner G."/>
            <person name="Fletcher C.F."/>
            <person name="Fukushima T."/>
            <person name="Furuno M."/>
            <person name="Futaki S."/>
            <person name="Gariboldi M."/>
            <person name="Georgii-Hemming P."/>
            <person name="Gingeras T.R."/>
            <person name="Gojobori T."/>
            <person name="Green R.E."/>
            <person name="Gustincich S."/>
            <person name="Harbers M."/>
            <person name="Hayashi Y."/>
            <person name="Hensch T.K."/>
            <person name="Hirokawa N."/>
            <person name="Hill D."/>
            <person name="Huminiecki L."/>
            <person name="Iacono M."/>
            <person name="Ikeo K."/>
            <person name="Iwama A."/>
            <person name="Ishikawa T."/>
            <person name="Jakt M."/>
            <person name="Kanapin A."/>
            <person name="Katoh M."/>
            <person name="Kawasawa Y."/>
            <person name="Kelso J."/>
            <person name="Kitamura H."/>
            <person name="Kitano H."/>
            <person name="Kollias G."/>
            <person name="Krishnan S.P."/>
            <person name="Kruger A."/>
            <person name="Kummerfeld S.K."/>
            <person name="Kurochkin I.V."/>
            <person name="Lareau L.F."/>
            <person name="Lazarevic D."/>
            <person name="Lipovich L."/>
            <person name="Liu J."/>
            <person name="Liuni S."/>
            <person name="McWilliam S."/>
            <person name="Madan Babu M."/>
            <person name="Madera M."/>
            <person name="Marchionni L."/>
            <person name="Matsuda H."/>
            <person name="Matsuzawa S."/>
            <person name="Miki H."/>
            <person name="Mignone F."/>
            <person name="Miyake S."/>
            <person name="Morris K."/>
            <person name="Mottagui-Tabar S."/>
            <person name="Mulder N."/>
            <person name="Nakano N."/>
            <person name="Nakauchi H."/>
            <person name="Ng P."/>
            <person name="Nilsson R."/>
            <person name="Nishiguchi S."/>
            <person name="Nishikawa S."/>
            <person name="Nori F."/>
            <person name="Ohara O."/>
            <person name="Okazaki Y."/>
            <person name="Orlando V."/>
            <person name="Pang K.C."/>
            <person name="Pavan W.J."/>
            <person name="Pavesi G."/>
            <person name="Pesole G."/>
            <person name="Petrovsky N."/>
            <person name="Piazza S."/>
            <person name="Reed J."/>
            <person name="Reid J.F."/>
            <person name="Ring B.Z."/>
            <person name="Ringwald M."/>
            <person name="Rost B."/>
            <person name="Ruan Y."/>
            <person name="Salzberg S.L."/>
            <person name="Sandelin A."/>
            <person name="Schneider C."/>
            <person name="Schoenbach C."/>
            <person name="Sekiguchi K."/>
            <person name="Semple C.A."/>
            <person name="Seno S."/>
            <person name="Sessa L."/>
            <person name="Sheng Y."/>
            <person name="Shibata Y."/>
            <person name="Shimada H."/>
            <person name="Shimada K."/>
            <person name="Silva D."/>
            <person name="Sinclair B."/>
            <person name="Sperling S."/>
            <person name="Stupka E."/>
            <person name="Sugiura K."/>
            <person name="Sultana R."/>
            <person name="Takenaka Y."/>
            <person name="Taki K."/>
            <person name="Tammoja K."/>
            <person name="Tan S.L."/>
            <person name="Tang S."/>
            <person name="Taylor M.S."/>
            <person name="Tegner J."/>
            <person name="Teichmann S.A."/>
            <person name="Ueda H.R."/>
            <person name="van Nimwegen E."/>
            <person name="Verardo R."/>
            <person name="Wei C.L."/>
            <person name="Yagi K."/>
            <person name="Yamanishi H."/>
            <person name="Zabarovsky E."/>
            <person name="Zhu S."/>
            <person name="Zimmer A."/>
            <person name="Hide W."/>
            <person name="Bult C."/>
            <person name="Grimmond S.M."/>
            <person name="Teasdale R.D."/>
            <person name="Liu E.T."/>
            <person name="Brusic V."/>
            <person name="Quackenbush J."/>
            <person name="Wahlestedt C."/>
            <person name="Mattick J.S."/>
            <person name="Hume D.A."/>
            <person name="Kai C."/>
            <person name="Sasaki D."/>
            <person name="Tomaru Y."/>
            <person name="Fukuda S."/>
            <person name="Kanamori-Katayama M."/>
            <person name="Suzuki M."/>
            <person name="Aoki J."/>
            <person name="Arakawa T."/>
            <person name="Iida J."/>
            <person name="Imamura K."/>
            <person name="Itoh M."/>
            <person name="Kato T."/>
            <person name="Kawaji H."/>
            <person name="Kawagashira N."/>
            <person name="Kawashima T."/>
            <person name="Kojima M."/>
            <person name="Kondo S."/>
            <person name="Konno H."/>
            <person name="Nakano K."/>
            <person name="Ninomiya N."/>
            <person name="Nishio T."/>
            <person name="Okada M."/>
            <person name="Plessy C."/>
            <person name="Shibata K."/>
            <person name="Shiraki T."/>
            <person name="Suzuki S."/>
            <person name="Tagami M."/>
            <person name="Waki K."/>
            <person name="Watahiki A."/>
            <person name="Okamura-Oho Y."/>
            <person name="Suzuki H."/>
            <person name="Kawai J."/>
            <person name="Hayashizaki Y."/>
        </authorList>
    </citation>
    <scope>NUCLEOTIDE SEQUENCE [LARGE SCALE MRNA] (ISOFORM 2)</scope>
    <source>
        <strain>BALB/cJ</strain>
        <strain>C57BL/6J</strain>
        <strain>DBA/2J</strain>
        <strain>NOD</strain>
        <tissue>Amnion</tissue>
        <tissue>Bone marrow</tissue>
        <tissue>Heart</tissue>
        <tissue>Kidney</tissue>
        <tissue>Liver</tissue>
        <tissue>Mammary gland</tissue>
        <tissue>Placenta</tissue>
        <tissue>Spinal ganglion</tissue>
        <tissue>Thymus</tissue>
    </source>
</reference>
<reference key="5">
    <citation type="journal article" date="2009" name="PLoS Biol.">
        <title>Lineage-specific biology revealed by a finished genome assembly of the mouse.</title>
        <authorList>
            <person name="Church D.M."/>
            <person name="Goodstadt L."/>
            <person name="Hillier L.W."/>
            <person name="Zody M.C."/>
            <person name="Goldstein S."/>
            <person name="She X."/>
            <person name="Bult C.J."/>
            <person name="Agarwala R."/>
            <person name="Cherry J.L."/>
            <person name="DiCuccio M."/>
            <person name="Hlavina W."/>
            <person name="Kapustin Y."/>
            <person name="Meric P."/>
            <person name="Maglott D."/>
            <person name="Birtle Z."/>
            <person name="Marques A.C."/>
            <person name="Graves T."/>
            <person name="Zhou S."/>
            <person name="Teague B."/>
            <person name="Potamousis K."/>
            <person name="Churas C."/>
            <person name="Place M."/>
            <person name="Herschleb J."/>
            <person name="Runnheim R."/>
            <person name="Forrest D."/>
            <person name="Amos-Landgraf J."/>
            <person name="Schwartz D.C."/>
            <person name="Cheng Z."/>
            <person name="Lindblad-Toh K."/>
            <person name="Eichler E.E."/>
            <person name="Ponting C.P."/>
        </authorList>
    </citation>
    <scope>NUCLEOTIDE SEQUENCE [LARGE SCALE GENOMIC DNA]</scope>
    <source>
        <strain>C57BL/6J</strain>
    </source>
</reference>
<reference key="6">
    <citation type="journal article" date="2004" name="Genome Res.">
        <title>The status, quality, and expansion of the NIH full-length cDNA project: the Mammalian Gene Collection (MGC).</title>
        <authorList>
            <consortium name="The MGC Project Team"/>
        </authorList>
    </citation>
    <scope>NUCLEOTIDE SEQUENCE [LARGE SCALE MRNA] (ISOFORM 2)</scope>
    <source>
        <strain>C57BL/6J</strain>
        <tissue>Embryonic germ cell</tissue>
    </source>
</reference>
<reference key="7">
    <citation type="submission" date="2007-03" db="UniProtKB">
        <authorList>
            <person name="Lubec G."/>
            <person name="Klug S."/>
        </authorList>
    </citation>
    <scope>PROTEIN SEQUENCE OF 108-120</scope>
    <scope>IDENTIFICATION BY MASS SPECTROMETRY</scope>
    <source>
        <tissue>Hippocampus</tissue>
    </source>
</reference>
<reference key="8">
    <citation type="journal article" date="1999" name="Mol. Cell. Biol.">
        <title>The Borgs, a new family of Cdc42 and TC10 GTPase-interacting proteins.</title>
        <authorList>
            <person name="Joberty G."/>
            <person name="Perlungher R.R."/>
            <person name="Macara I.G."/>
        </authorList>
    </citation>
    <scope>INTERACTION WITH CDC42EP4</scope>
</reference>
<reference key="9">
    <citation type="journal article" date="2000" name="Nat. Cell Biol.">
        <title>The cell-polarity protein Par6 links Par3 and atypical protein kinase C to Cdc42.</title>
        <authorList>
            <person name="Joberty G."/>
            <person name="Petersen C."/>
            <person name="Gao L."/>
            <person name="Macara I.G."/>
        </authorList>
    </citation>
    <scope>SUBUNIT OF A COMPLEX CONTAINING PARD6B; PARD3 AND PRKCZ</scope>
    <scope>MUTAGENESIS OF THR-17</scope>
</reference>
<reference key="10">
    <citation type="journal article" date="1998" name="J. Biol. Chem.">
        <title>Analysis of RhoA-binding proteins reveals an interaction domain conserved in heterotrimeric G protein beta subunits and the yeast response regulator protein Skn7.</title>
        <authorList>
            <person name="Alberts A.S."/>
            <person name="Bouquin N."/>
            <person name="Johnston L.H."/>
            <person name="Treisman R."/>
        </authorList>
    </citation>
    <scope>INTERACTION WITH NET1</scope>
</reference>
<reference key="11">
    <citation type="journal article" date="2003" name="EMBO J.">
        <title>TCGAP, a multidomain Rho GTPase-activating protein involved in insulin-stimulated glucose transport.</title>
        <authorList>
            <person name="Chiang S.-H."/>
            <person name="Hwang J."/>
            <person name="Legendre M."/>
            <person name="Zhang M."/>
            <person name="Kimura A."/>
            <person name="Saltiel A.R."/>
        </authorList>
    </citation>
    <scope>INTERACTION WITH ARHGAP33/TCGAP</scope>
</reference>
<reference key="12">
    <citation type="journal article" date="2005" name="FEBS Lett.">
        <title>Zizimin2: a novel, DOCK180-related Cdc42 guanine nucleotide exchange factor expressed predominantly in lymphocytes.</title>
        <authorList>
            <person name="Nishikimi A."/>
            <person name="Meller N."/>
            <person name="Uekawa N."/>
            <person name="Isobe K."/>
            <person name="Schwartz M.A."/>
            <person name="Maruyama M."/>
        </authorList>
    </citation>
    <scope>ACTIVITY REGULATION</scope>
    <scope>INTERACTION WITH DOCK11</scope>
</reference>
<reference key="13">
    <citation type="journal article" date="2006" name="J. Biol. Chem.">
        <title>Identification of a DOCK180-related guanine nucleotide exchange factor that is capable of mediating a positive feedback activation of Cdc42.</title>
        <authorList>
            <person name="Lin Q."/>
            <person name="Yang W."/>
            <person name="Baird D."/>
            <person name="Feng Q."/>
            <person name="Cerione R.A."/>
        </authorList>
    </citation>
    <scope>INTERACTION WITH DOCK11 AND IQGAP1</scope>
    <scope>MUTAGENESIS OF THR-17 AND GLN-61</scope>
</reference>
<reference key="14">
    <citation type="journal article" date="2006" name="Mol. Cell. Biol.">
        <title>Ccpg1, a novel scaffold protein that regulates the activity of the Rho guanine nucleotide exchange factor Dbs.</title>
        <authorList>
            <person name="Kostenko E.V."/>
            <person name="Olabisi O.O."/>
            <person name="Sahay S."/>
            <person name="Rodriguez P.L."/>
            <person name="Whitehead I.P."/>
        </authorList>
    </citation>
    <scope>INTERACTION WITH CCPG1</scope>
</reference>
<reference key="15">
    <citation type="journal article" date="2010" name="Cell">
        <title>A tissue-specific atlas of mouse protein phosphorylation and expression.</title>
        <authorList>
            <person name="Huttlin E.L."/>
            <person name="Jedrychowski M.P."/>
            <person name="Elias J.E."/>
            <person name="Goswami T."/>
            <person name="Rad R."/>
            <person name="Beausoleil S.A."/>
            <person name="Villen J."/>
            <person name="Haas W."/>
            <person name="Sowa M.E."/>
            <person name="Gygi S.P."/>
        </authorList>
    </citation>
    <scope>IDENTIFICATION BY MASS SPECTROMETRY [LARGE SCALE ANALYSIS]</scope>
    <source>
        <tissue>Brain</tissue>
        <tissue>Brown adipose tissue</tissue>
        <tissue>Heart</tissue>
        <tissue>Kidney</tissue>
        <tissue>Liver</tissue>
        <tissue>Lung</tissue>
        <tissue>Pancreas</tissue>
        <tissue>Spleen</tissue>
        <tissue>Testis</tissue>
    </source>
</reference>
<reference key="16">
    <citation type="journal article" date="2012" name="Blood">
        <title>DOCK8 is a Cdc42 activator critical for interstitial dendritic cell migration during immune responses.</title>
        <authorList>
            <person name="Harada Y."/>
            <person name="Tanaka Y."/>
            <person name="Terasawa M."/>
            <person name="Pieczyk M."/>
            <person name="Habiro K."/>
            <person name="Katakai T."/>
            <person name="Hanawa-Suetsugu K."/>
            <person name="Kukimoto-Niino M."/>
            <person name="Nishizaki T."/>
            <person name="Shirouzu M."/>
            <person name="Duan X."/>
            <person name="Uruno T."/>
            <person name="Nishikimi A."/>
            <person name="Sanematsu F."/>
            <person name="Yokoyama S."/>
            <person name="Stein J.V."/>
            <person name="Kinashi T."/>
            <person name="Fukui Y."/>
        </authorList>
    </citation>
    <scope>ACTIVITY REGULATION</scope>
    <scope>INTERACTION WITH DOCK8</scope>
    <scope>SUBCELLULAR LOCATION</scope>
</reference>
<reference key="17">
    <citation type="journal article" date="2012" name="Immun. Ageing">
        <title>Age-related guanine nucleotide exchange factor, mouse Zizimin2, induces filopodia in bone marrow-derived dendritic cells.</title>
        <authorList>
            <person name="Sakabe I."/>
            <person name="Asai A."/>
            <person name="Iijima J."/>
            <person name="Maruyama M."/>
        </authorList>
    </citation>
    <scope>FUNCTION</scope>
    <scope>MUTAGENESIS OF GLY-12 AND THR-17</scope>
</reference>
<reference key="18">
    <citation type="journal article" date="2014" name="J. Biol. Chem.">
        <title>Rho-GTPase-activating protein interacting with Cdc-42-interacting protein 4 homolog 2 (Rich2): a new Ras-related C3 botulinum toxin substrate 1 (Rac1) GTPase-activating protein that controls dendritic spine morphogenesis.</title>
        <authorList>
            <person name="Raynaud F."/>
            <person name="Moutin E."/>
            <person name="Schmidt S."/>
            <person name="Dahl J."/>
            <person name="Bertaso F."/>
            <person name="Boeckers T.M."/>
            <person name="Homburger V."/>
            <person name="Fagni L."/>
        </authorList>
    </citation>
    <scope>CATALYTIC ACTIVITY</scope>
    <scope>FUNCTION</scope>
    <scope>ACTIVITY REGULATION</scope>
    <scope>SUBCELLULAR LOCATION</scope>
</reference>
<reference key="19">
    <citation type="journal article" date="2015" name="Mol. Biol. Cell">
        <title>The RhoGEF DOCK10 is essential for dendritic spine morphogenesis.</title>
        <authorList>
            <person name="Jaudon F."/>
            <person name="Raynaud F."/>
            <person name="Wehrle R."/>
            <person name="Bellanger J.M."/>
            <person name="Doulazmi M."/>
            <person name="Vodjdani G."/>
            <person name="Gasman S."/>
            <person name="Fagni L."/>
            <person name="Dusart I."/>
            <person name="Debant A."/>
            <person name="Schmidt S."/>
        </authorList>
    </citation>
    <scope>FUNCTION</scope>
</reference>
<reference key="20">
    <citation type="journal article" date="2016" name="Mol. Brain">
        <title>Enlarged dendritic spines and pronounced neophobia in mice lacking the PSD protein RICH2.</title>
        <authorList>
            <person name="Sarowar T."/>
            <person name="Grabrucker S."/>
            <person name="Foehr K."/>
            <person name="Mangus K."/>
            <person name="Eckert M."/>
            <person name="Bockmann J."/>
            <person name="Boeckers T.M."/>
            <person name="Grabrucker A.M."/>
        </authorList>
    </citation>
    <scope>ACTIVITY REGULATION</scope>
    <scope>CATALYTIC ACTIVITY</scope>
</reference>
<reference key="21">
    <citation type="journal article" date="2018" name="Sci. Rep.">
        <title>MARCKS regulates neuritogenesis and interacts with a CDC42 signaling network.</title>
        <authorList>
            <person name="Brudvig J.J."/>
            <person name="Cain J.T."/>
            <person name="Sears R.M."/>
            <person name="Schmidt-Grimminger G.G."/>
            <person name="Wittchen E.S."/>
            <person name="Adler K.B."/>
            <person name="Ghashghaei H.T."/>
            <person name="Weimer J.M."/>
        </authorList>
    </citation>
    <scope>FUNCTION</scope>
    <scope>SUBCELLULAR LOCATION</scope>
    <scope>INTERACTION WITH MARCKS</scope>
</reference>
<organism>
    <name type="scientific">Mus musculus</name>
    <name type="common">Mouse</name>
    <dbReference type="NCBI Taxonomy" id="10090"/>
    <lineage>
        <taxon>Eukaryota</taxon>
        <taxon>Metazoa</taxon>
        <taxon>Chordata</taxon>
        <taxon>Craniata</taxon>
        <taxon>Vertebrata</taxon>
        <taxon>Euteleostomi</taxon>
        <taxon>Mammalia</taxon>
        <taxon>Eutheria</taxon>
        <taxon>Euarchontoglires</taxon>
        <taxon>Glires</taxon>
        <taxon>Rodentia</taxon>
        <taxon>Myomorpha</taxon>
        <taxon>Muroidea</taxon>
        <taxon>Muridae</taxon>
        <taxon>Murinae</taxon>
        <taxon>Mus</taxon>
        <taxon>Mus</taxon>
    </lineage>
</organism>
<evidence type="ECO:0000250" key="1"/>
<evidence type="ECO:0000250" key="2">
    <source>
        <dbReference type="UniProtKB" id="P60953"/>
    </source>
</evidence>
<evidence type="ECO:0000250" key="3">
    <source>
        <dbReference type="UniProtKB" id="Q8CFN2"/>
    </source>
</evidence>
<evidence type="ECO:0000255" key="4"/>
<evidence type="ECO:0000269" key="5">
    <source>
    </source>
</evidence>
<evidence type="ECO:0000269" key="6">
    <source>
    </source>
</evidence>
<evidence type="ECO:0000269" key="7">
    <source>
    </source>
</evidence>
<evidence type="ECO:0000269" key="8">
    <source>
    </source>
</evidence>
<evidence type="ECO:0000269" key="9">
    <source>
    </source>
</evidence>
<evidence type="ECO:0000269" key="10">
    <source>
    </source>
</evidence>
<evidence type="ECO:0000269" key="11">
    <source>
    </source>
</evidence>
<evidence type="ECO:0000269" key="12">
    <source>
    </source>
</evidence>
<evidence type="ECO:0000269" key="13">
    <source>
    </source>
</evidence>
<evidence type="ECO:0000269" key="14">
    <source>
    </source>
</evidence>
<evidence type="ECO:0000269" key="15">
    <source>
    </source>
</evidence>
<evidence type="ECO:0000269" key="16">
    <source>
    </source>
</evidence>
<evidence type="ECO:0000269" key="17">
    <source>
    </source>
</evidence>
<evidence type="ECO:0000305" key="18"/>
<evidence type="ECO:0000305" key="19">
    <source>
    </source>
</evidence>
<evidence type="ECO:0000305" key="20">
    <source>
    </source>
</evidence>
<evidence type="ECO:0000305" key="21">
    <source>
    </source>
</evidence>
<evidence type="ECO:0000312" key="22">
    <source>
        <dbReference type="MGI" id="MGI:106211"/>
    </source>
</evidence>
<evidence type="ECO:0007829" key="23">
    <source>
        <dbReference type="PDB" id="5C2J"/>
    </source>
</evidence>
<gene>
    <name evidence="22" type="primary">Cdc42</name>
</gene>
<proteinExistence type="evidence at protein level"/>
<keyword id="KW-0002">3D-structure</keyword>
<keyword id="KW-0025">Alternative splicing</keyword>
<keyword id="KW-1003">Cell membrane</keyword>
<keyword id="KW-0966">Cell projection</keyword>
<keyword id="KW-0963">Cytoplasm</keyword>
<keyword id="KW-0206">Cytoskeleton</keyword>
<keyword id="KW-0221">Differentiation</keyword>
<keyword id="KW-0903">Direct protein sequencing</keyword>
<keyword id="KW-0342">GTP-binding</keyword>
<keyword id="KW-0378">Hydrolase</keyword>
<keyword id="KW-0449">Lipoprotein</keyword>
<keyword id="KW-0472">Membrane</keyword>
<keyword id="KW-0488">Methylation</keyword>
<keyword id="KW-0524">Neurogenesis</keyword>
<keyword id="KW-0547">Nucleotide-binding</keyword>
<keyword id="KW-0597">Phosphoprotein</keyword>
<keyword id="KW-0636">Prenylation</keyword>
<keyword id="KW-1185">Reference proteome</keyword>
<dbReference type="EC" id="3.6.5.2" evidence="13 15"/>
<dbReference type="EMBL" id="L11318">
    <property type="protein sequence ID" value="AAA37410.1"/>
    <property type="molecule type" value="mRNA"/>
</dbReference>
<dbReference type="EMBL" id="U37720">
    <property type="protein sequence ID" value="AAC00028.1"/>
    <property type="molecule type" value="mRNA"/>
</dbReference>
<dbReference type="EMBL" id="L78075">
    <property type="protein sequence ID" value="AAB40051.1"/>
    <property type="molecule type" value="Genomic_DNA"/>
</dbReference>
<dbReference type="EMBL" id="AK003098">
    <property type="protein sequence ID" value="BAB22563.1"/>
    <property type="molecule type" value="mRNA"/>
</dbReference>
<dbReference type="EMBL" id="AK051543">
    <property type="protein sequence ID" value="BAC34669.1"/>
    <property type="molecule type" value="mRNA"/>
</dbReference>
<dbReference type="EMBL" id="AK075567">
    <property type="protein sequence ID" value="BAC35825.1"/>
    <property type="molecule type" value="mRNA"/>
</dbReference>
<dbReference type="EMBL" id="AK144216">
    <property type="protein sequence ID" value="BAE25778.1"/>
    <property type="molecule type" value="mRNA"/>
</dbReference>
<dbReference type="EMBL" id="AK151087">
    <property type="protein sequence ID" value="BAE30100.1"/>
    <property type="molecule type" value="mRNA"/>
</dbReference>
<dbReference type="EMBL" id="AK151726">
    <property type="protein sequence ID" value="BAE30644.1"/>
    <property type="molecule type" value="mRNA"/>
</dbReference>
<dbReference type="EMBL" id="AK153564">
    <property type="protein sequence ID" value="BAE32098.1"/>
    <property type="molecule type" value="mRNA"/>
</dbReference>
<dbReference type="EMBL" id="AK154870">
    <property type="protein sequence ID" value="BAE32891.1"/>
    <property type="molecule type" value="mRNA"/>
</dbReference>
<dbReference type="EMBL" id="AK159470">
    <property type="protein sequence ID" value="BAE35111.1"/>
    <property type="molecule type" value="mRNA"/>
</dbReference>
<dbReference type="EMBL" id="AK166281">
    <property type="protein sequence ID" value="BAE38678.1"/>
    <property type="molecule type" value="mRNA"/>
</dbReference>
<dbReference type="EMBL" id="AK167195">
    <property type="protein sequence ID" value="BAE39325.1"/>
    <property type="molecule type" value="mRNA"/>
</dbReference>
<dbReference type="EMBL" id="AK167400">
    <property type="protein sequence ID" value="BAE39489.1"/>
    <property type="molecule type" value="mRNA"/>
</dbReference>
<dbReference type="EMBL" id="AK167609">
    <property type="protein sequence ID" value="BAE39663.1"/>
    <property type="molecule type" value="mRNA"/>
</dbReference>
<dbReference type="EMBL" id="AK168013">
    <property type="protein sequence ID" value="BAE40000.1"/>
    <property type="molecule type" value="mRNA"/>
</dbReference>
<dbReference type="EMBL" id="AK168076">
    <property type="protein sequence ID" value="BAE40049.1"/>
    <property type="molecule type" value="mRNA"/>
</dbReference>
<dbReference type="EMBL" id="AK168089">
    <property type="protein sequence ID" value="BAE40062.1"/>
    <property type="molecule type" value="mRNA"/>
</dbReference>
<dbReference type="EMBL" id="AK168276">
    <property type="protein sequence ID" value="BAE40222.1"/>
    <property type="molecule type" value="mRNA"/>
</dbReference>
<dbReference type="EMBL" id="AK168758">
    <property type="protein sequence ID" value="BAE40595.1"/>
    <property type="molecule type" value="mRNA"/>
</dbReference>
<dbReference type="EMBL" id="AK168820">
    <property type="protein sequence ID" value="BAE40647.1"/>
    <property type="molecule type" value="mRNA"/>
</dbReference>
<dbReference type="EMBL" id="AK169122">
    <property type="protein sequence ID" value="BAE40902.1"/>
    <property type="molecule type" value="mRNA"/>
</dbReference>
<dbReference type="EMBL" id="AK169232">
    <property type="protein sequence ID" value="BAE41001.1"/>
    <property type="molecule type" value="mRNA"/>
</dbReference>
<dbReference type="EMBL" id="AK169805">
    <property type="protein sequence ID" value="BAE41379.1"/>
    <property type="molecule type" value="mRNA"/>
</dbReference>
<dbReference type="EMBL" id="AL645468">
    <property type="status" value="NOT_ANNOTATED_CDS"/>
    <property type="molecule type" value="Genomic_DNA"/>
</dbReference>
<dbReference type="EMBL" id="BC064792">
    <property type="protein sequence ID" value="AAH64792.1"/>
    <property type="molecule type" value="mRNA"/>
</dbReference>
<dbReference type="CCDS" id="CCDS18816.1"/>
<dbReference type="CCDS" id="CCDS57305.1">
    <molecule id="P60766-1"/>
</dbReference>
<dbReference type="RefSeq" id="NP_001230698.1">
    <molecule id="P60766-1"/>
    <property type="nucleotide sequence ID" value="NM_001243769.2"/>
</dbReference>
<dbReference type="RefSeq" id="NP_001407060.1">
    <molecule id="P60766-2"/>
    <property type="nucleotide sequence ID" value="NM_001420131.1"/>
</dbReference>
<dbReference type="RefSeq" id="NP_001407061.1">
    <molecule id="P60766-2"/>
    <property type="nucleotide sequence ID" value="NM_001420132.1"/>
</dbReference>
<dbReference type="RefSeq" id="NP_001407062.1">
    <molecule id="P60766-2"/>
    <property type="nucleotide sequence ID" value="NM_001420133.1"/>
</dbReference>
<dbReference type="RefSeq" id="NP_001407063.1">
    <molecule id="P60766-1"/>
    <property type="nucleotide sequence ID" value="NM_001420134.1"/>
</dbReference>
<dbReference type="RefSeq" id="NP_001407064.1">
    <molecule id="P60766-1"/>
    <property type="nucleotide sequence ID" value="NM_001420135.1"/>
</dbReference>
<dbReference type="RefSeq" id="NP_001407065.1">
    <molecule id="P60766-1"/>
    <property type="nucleotide sequence ID" value="NM_001420136.1"/>
</dbReference>
<dbReference type="RefSeq" id="NP_033991.1">
    <molecule id="P60766-2"/>
    <property type="nucleotide sequence ID" value="NM_009861.4"/>
</dbReference>
<dbReference type="RefSeq" id="XP_030108999.1">
    <molecule id="P60766-2"/>
    <property type="nucleotide sequence ID" value="XM_030253139.2"/>
</dbReference>
<dbReference type="RefSeq" id="XP_030109001.1">
    <molecule id="P60766-1"/>
    <property type="nucleotide sequence ID" value="XM_030253141.2"/>
</dbReference>
<dbReference type="RefSeq" id="XP_036019511.1">
    <molecule id="P60766-2"/>
    <property type="nucleotide sequence ID" value="XM_036163618.1"/>
</dbReference>
<dbReference type="RefSeq" id="XP_036019512.1">
    <molecule id="P60766-1"/>
    <property type="nucleotide sequence ID" value="XM_036163619.1"/>
</dbReference>
<dbReference type="PDB" id="3EG5">
    <property type="method" value="X-ray"/>
    <property type="resolution" value="2.70 A"/>
    <property type="chains" value="A/C=1-178"/>
</dbReference>
<dbReference type="PDB" id="5C2J">
    <property type="method" value="X-ray"/>
    <property type="resolution" value="2.50 A"/>
    <property type="chains" value="B=1-191"/>
</dbReference>
<dbReference type="PDBsum" id="3EG5"/>
<dbReference type="PDBsum" id="5C2J"/>
<dbReference type="BMRB" id="P60766"/>
<dbReference type="SMR" id="P60766"/>
<dbReference type="BioGRID" id="198627">
    <property type="interactions" value="72"/>
</dbReference>
<dbReference type="CORUM" id="P60766"/>
<dbReference type="DIP" id="DIP-32554N"/>
<dbReference type="FunCoup" id="P60766">
    <property type="interactions" value="3827"/>
</dbReference>
<dbReference type="IntAct" id="P60766">
    <property type="interactions" value="15"/>
</dbReference>
<dbReference type="MINT" id="P60766"/>
<dbReference type="STRING" id="10090.ENSMUSP00000054634"/>
<dbReference type="ChEMBL" id="CHEMBL4523257"/>
<dbReference type="GlyGen" id="P60766">
    <property type="glycosylation" value="1 site, 1 O-linked glycan (1 site)"/>
</dbReference>
<dbReference type="iPTMnet" id="P60766"/>
<dbReference type="PhosphoSitePlus" id="P60766"/>
<dbReference type="SwissPalm" id="P60766"/>
<dbReference type="jPOST" id="P60766"/>
<dbReference type="PaxDb" id="10090-ENSMUSP00000054634"/>
<dbReference type="PeptideAtlas" id="P60766"/>
<dbReference type="ProteomicsDB" id="280033"/>
<dbReference type="ProteomicsDB" id="280034">
    <molecule id="P60766-1"/>
</dbReference>
<dbReference type="Pumba" id="P60766"/>
<dbReference type="Antibodypedia" id="3818">
    <property type="antibodies" value="526 antibodies from 43 providers"/>
</dbReference>
<dbReference type="DNASU" id="12540"/>
<dbReference type="Ensembl" id="ENSMUST00000030417.10">
    <molecule id="P60766-1"/>
    <property type="protein sequence ID" value="ENSMUSP00000030417.10"/>
    <property type="gene ID" value="ENSMUSG00000006699.18"/>
</dbReference>
<dbReference type="Ensembl" id="ENSMUST00000051477.13">
    <molecule id="P60766-2"/>
    <property type="protein sequence ID" value="ENSMUSP00000054634.7"/>
    <property type="gene ID" value="ENSMUSG00000006699.18"/>
</dbReference>
<dbReference type="GeneID" id="12540"/>
<dbReference type="KEGG" id="mmu:12540"/>
<dbReference type="UCSC" id="uc008viw.3">
    <property type="organism name" value="mouse"/>
</dbReference>
<dbReference type="UCSC" id="uc008viy.2">
    <molecule id="P60766-1"/>
    <property type="organism name" value="mouse"/>
</dbReference>
<dbReference type="AGR" id="MGI:106211"/>
<dbReference type="CTD" id="998"/>
<dbReference type="MGI" id="MGI:106211">
    <property type="gene designation" value="Cdc42"/>
</dbReference>
<dbReference type="VEuPathDB" id="HostDB:ENSMUSG00000006699"/>
<dbReference type="eggNOG" id="KOG0393">
    <property type="taxonomic scope" value="Eukaryota"/>
</dbReference>
<dbReference type="GeneTree" id="ENSGT00940000153675"/>
<dbReference type="HOGENOM" id="CLU_041217_21_3_1"/>
<dbReference type="InParanoid" id="P60766"/>
<dbReference type="OMA" id="GDEPYTF"/>
<dbReference type="OrthoDB" id="8830751at2759"/>
<dbReference type="PhylomeDB" id="P60766"/>
<dbReference type="TreeFam" id="TF101109"/>
<dbReference type="Reactome" id="R-MMU-114604">
    <property type="pathway name" value="GPVI-mediated activation cascade"/>
</dbReference>
<dbReference type="Reactome" id="R-MMU-182971">
    <property type="pathway name" value="EGFR downregulation"/>
</dbReference>
<dbReference type="Reactome" id="R-MMU-2029482">
    <property type="pathway name" value="Regulation of actin dynamics for phagocytic cup formation"/>
</dbReference>
<dbReference type="Reactome" id="R-MMU-389359">
    <property type="pathway name" value="CD28 dependent Vav1 pathway"/>
</dbReference>
<dbReference type="Reactome" id="R-MMU-3928662">
    <property type="pathway name" value="EPHB-mediated forward signaling"/>
</dbReference>
<dbReference type="Reactome" id="R-MMU-418885">
    <property type="pathway name" value="DCC mediated attractive signaling"/>
</dbReference>
<dbReference type="Reactome" id="R-MMU-4420097">
    <property type="pathway name" value="VEGFA-VEGFR2 Pathway"/>
</dbReference>
<dbReference type="Reactome" id="R-MMU-525793">
    <property type="pathway name" value="Myogenesis"/>
</dbReference>
<dbReference type="Reactome" id="R-MMU-5625970">
    <property type="pathway name" value="RHO GTPases activate KTN1"/>
</dbReference>
<dbReference type="Reactome" id="R-MMU-5626467">
    <property type="pathway name" value="RHO GTPases activate IQGAPs"/>
</dbReference>
<dbReference type="Reactome" id="R-MMU-5627123">
    <property type="pathway name" value="RHO GTPases activate PAKs"/>
</dbReference>
<dbReference type="Reactome" id="R-MMU-5663213">
    <property type="pathway name" value="RHO GTPases Activate WASPs and WAVEs"/>
</dbReference>
<dbReference type="Reactome" id="R-MMU-5663220">
    <property type="pathway name" value="RHO GTPases Activate Formins"/>
</dbReference>
<dbReference type="Reactome" id="R-MMU-5687128">
    <property type="pathway name" value="MAPK6/MAPK4 signaling"/>
</dbReference>
<dbReference type="Reactome" id="R-MMU-8964616">
    <property type="pathway name" value="G beta:gamma signalling through CDC42"/>
</dbReference>
<dbReference type="Reactome" id="R-MMU-9013148">
    <property type="pathway name" value="CDC42 GTPase cycle"/>
</dbReference>
<dbReference type="Reactome" id="R-MMU-9013149">
    <property type="pathway name" value="RAC1 GTPase cycle"/>
</dbReference>
<dbReference type="Reactome" id="R-MMU-9013404">
    <property type="pathway name" value="RAC2 GTPase cycle"/>
</dbReference>
<dbReference type="Reactome" id="R-MMU-9013406">
    <property type="pathway name" value="RHOQ GTPase cycle"/>
</dbReference>
<dbReference type="Reactome" id="R-MMU-9013408">
    <property type="pathway name" value="RHOG GTPase cycle"/>
</dbReference>
<dbReference type="Reactome" id="R-MMU-9013420">
    <property type="pathway name" value="RHOU GTPase cycle"/>
</dbReference>
<dbReference type="Reactome" id="R-MMU-9013423">
    <property type="pathway name" value="RAC3 GTPase cycle"/>
</dbReference>
<dbReference type="Reactome" id="R-MMU-9013424">
    <property type="pathway name" value="RHOV GTPase cycle"/>
</dbReference>
<dbReference type="Reactome" id="R-MMU-983231">
    <property type="pathway name" value="Factors involved in megakaryocyte development and platelet production"/>
</dbReference>
<dbReference type="BioGRID-ORCS" id="12540">
    <property type="hits" value="27 hits in 78 CRISPR screens"/>
</dbReference>
<dbReference type="CD-CODE" id="01CA17F3">
    <property type="entry name" value="Centrosome"/>
</dbReference>
<dbReference type="CD-CODE" id="CE726F99">
    <property type="entry name" value="Postsynaptic density"/>
</dbReference>
<dbReference type="ChiTaRS" id="Cdc42">
    <property type="organism name" value="mouse"/>
</dbReference>
<dbReference type="EvolutionaryTrace" id="P60766"/>
<dbReference type="PRO" id="PR:P60766"/>
<dbReference type="Proteomes" id="UP000000589">
    <property type="component" value="Chromosome 4"/>
</dbReference>
<dbReference type="RNAct" id="P60766">
    <property type="molecule type" value="protein"/>
</dbReference>
<dbReference type="Bgee" id="ENSMUSG00000006699">
    <property type="expression patterns" value="Expressed in peripheral lymph node and 272 other cell types or tissues"/>
</dbReference>
<dbReference type="GO" id="GO:0045177">
    <property type="term" value="C:apical part of cell"/>
    <property type="evidence" value="ECO:0000314"/>
    <property type="project" value="MGI"/>
</dbReference>
<dbReference type="GO" id="GO:0031252">
    <property type="term" value="C:cell leading edge"/>
    <property type="evidence" value="ECO:0000314"/>
    <property type="project" value="MGI"/>
</dbReference>
<dbReference type="GO" id="GO:0071944">
    <property type="term" value="C:cell periphery"/>
    <property type="evidence" value="ECO:0000314"/>
    <property type="project" value="MGI"/>
</dbReference>
<dbReference type="GO" id="GO:0042995">
    <property type="term" value="C:cell projection"/>
    <property type="evidence" value="ECO:0000314"/>
    <property type="project" value="MGI"/>
</dbReference>
<dbReference type="GO" id="GO:0005911">
    <property type="term" value="C:cell-cell junction"/>
    <property type="evidence" value="ECO:0000314"/>
    <property type="project" value="MGI"/>
</dbReference>
<dbReference type="GO" id="GO:0005813">
    <property type="term" value="C:centrosome"/>
    <property type="evidence" value="ECO:0007669"/>
    <property type="project" value="UniProtKB-SubCell"/>
</dbReference>
<dbReference type="GO" id="GO:0005737">
    <property type="term" value="C:cytoplasm"/>
    <property type="evidence" value="ECO:0000314"/>
    <property type="project" value="MGI"/>
</dbReference>
<dbReference type="GO" id="GO:0036464">
    <property type="term" value="C:cytoplasmic ribonucleoprotein granule"/>
    <property type="evidence" value="ECO:0007669"/>
    <property type="project" value="Ensembl"/>
</dbReference>
<dbReference type="GO" id="GO:0005829">
    <property type="term" value="C:cytosol"/>
    <property type="evidence" value="ECO:0000314"/>
    <property type="project" value="MGI"/>
</dbReference>
<dbReference type="GO" id="GO:0030425">
    <property type="term" value="C:dendrite"/>
    <property type="evidence" value="ECO:0007669"/>
    <property type="project" value="UniProtKB-SubCell"/>
</dbReference>
<dbReference type="GO" id="GO:0030175">
    <property type="term" value="C:filopodium"/>
    <property type="evidence" value="ECO:0007669"/>
    <property type="project" value="Ensembl"/>
</dbReference>
<dbReference type="GO" id="GO:0098978">
    <property type="term" value="C:glutamatergic synapse"/>
    <property type="evidence" value="ECO:0000314"/>
    <property type="project" value="SynGO"/>
</dbReference>
<dbReference type="GO" id="GO:0017119">
    <property type="term" value="C:Golgi transport complex"/>
    <property type="evidence" value="ECO:0007669"/>
    <property type="project" value="Ensembl"/>
</dbReference>
<dbReference type="GO" id="GO:0031258">
    <property type="term" value="C:lamellipodium membrane"/>
    <property type="evidence" value="ECO:0007669"/>
    <property type="project" value="UniProtKB-SubCell"/>
</dbReference>
<dbReference type="GO" id="GO:0031256">
    <property type="term" value="C:leading edge membrane"/>
    <property type="evidence" value="ECO:0000314"/>
    <property type="project" value="MGI"/>
</dbReference>
<dbReference type="GO" id="GO:0016020">
    <property type="term" value="C:membrane"/>
    <property type="evidence" value="ECO:0000250"/>
    <property type="project" value="UniProtKB"/>
</dbReference>
<dbReference type="GO" id="GO:0030496">
    <property type="term" value="C:midbody"/>
    <property type="evidence" value="ECO:0000250"/>
    <property type="project" value="UniProtKB"/>
</dbReference>
<dbReference type="GO" id="GO:0072686">
    <property type="term" value="C:mitotic spindle"/>
    <property type="evidence" value="ECO:0000250"/>
    <property type="project" value="UniProtKB"/>
</dbReference>
<dbReference type="GO" id="GO:0043209">
    <property type="term" value="C:myelin sheath"/>
    <property type="evidence" value="ECO:0007005"/>
    <property type="project" value="UniProtKB"/>
</dbReference>
<dbReference type="GO" id="GO:0043025">
    <property type="term" value="C:neuronal cell body"/>
    <property type="evidence" value="ECO:0007669"/>
    <property type="project" value="Ensembl"/>
</dbReference>
<dbReference type="GO" id="GO:0045335">
    <property type="term" value="C:phagocytic vesicle"/>
    <property type="evidence" value="ECO:0000314"/>
    <property type="project" value="MGI"/>
</dbReference>
<dbReference type="GO" id="GO:0005886">
    <property type="term" value="C:plasma membrane"/>
    <property type="evidence" value="ECO:0000314"/>
    <property type="project" value="MGI"/>
</dbReference>
<dbReference type="GO" id="GO:0098794">
    <property type="term" value="C:postsynapse"/>
    <property type="evidence" value="ECO:0000314"/>
    <property type="project" value="SynGO"/>
</dbReference>
<dbReference type="GO" id="GO:0051233">
    <property type="term" value="C:spindle midzone"/>
    <property type="evidence" value="ECO:0000250"/>
    <property type="project" value="UniProtKB"/>
</dbReference>
<dbReference type="GO" id="GO:0000322">
    <property type="term" value="C:storage vacuole"/>
    <property type="evidence" value="ECO:0000314"/>
    <property type="project" value="MGI"/>
</dbReference>
<dbReference type="GO" id="GO:0034191">
    <property type="term" value="F:apolipoprotein A-I receptor binding"/>
    <property type="evidence" value="ECO:0007669"/>
    <property type="project" value="Ensembl"/>
</dbReference>
<dbReference type="GO" id="GO:0003925">
    <property type="term" value="F:G protein activity"/>
    <property type="evidence" value="ECO:0007669"/>
    <property type="project" value="UniProtKB-EC"/>
</dbReference>
<dbReference type="GO" id="GO:0032427">
    <property type="term" value="F:GBD domain binding"/>
    <property type="evidence" value="ECO:0007669"/>
    <property type="project" value="Ensembl"/>
</dbReference>
<dbReference type="GO" id="GO:0005525">
    <property type="term" value="F:GTP binding"/>
    <property type="evidence" value="ECO:0000266"/>
    <property type="project" value="MGI"/>
</dbReference>
<dbReference type="GO" id="GO:0030742">
    <property type="term" value="F:GTP-dependent protein binding"/>
    <property type="evidence" value="ECO:0000353"/>
    <property type="project" value="UniProtKB"/>
</dbReference>
<dbReference type="GO" id="GO:0003924">
    <property type="term" value="F:GTPase activity"/>
    <property type="evidence" value="ECO:0000314"/>
    <property type="project" value="MGI"/>
</dbReference>
<dbReference type="GO" id="GO:0042802">
    <property type="term" value="F:identical protein binding"/>
    <property type="evidence" value="ECO:0007669"/>
    <property type="project" value="Ensembl"/>
</dbReference>
<dbReference type="GO" id="GO:0019901">
    <property type="term" value="F:protein kinase binding"/>
    <property type="evidence" value="ECO:0000353"/>
    <property type="project" value="BHF-UCL"/>
</dbReference>
<dbReference type="GO" id="GO:0051022">
    <property type="term" value="F:Rho GDP-dissociation inhibitor binding"/>
    <property type="evidence" value="ECO:0000314"/>
    <property type="project" value="MGI"/>
</dbReference>
<dbReference type="GO" id="GO:0031996">
    <property type="term" value="F:thioesterase binding"/>
    <property type="evidence" value="ECO:0007669"/>
    <property type="project" value="Ensembl"/>
</dbReference>
<dbReference type="GO" id="GO:0061630">
    <property type="term" value="F:ubiquitin protein ligase activity"/>
    <property type="evidence" value="ECO:0007669"/>
    <property type="project" value="Ensembl"/>
</dbReference>
<dbReference type="GO" id="GO:0007015">
    <property type="term" value="P:actin filament organization"/>
    <property type="evidence" value="ECO:0000250"/>
    <property type="project" value="UniProtKB"/>
</dbReference>
<dbReference type="GO" id="GO:0034332">
    <property type="term" value="P:adherens junction organization"/>
    <property type="evidence" value="ECO:0000315"/>
    <property type="project" value="MGI"/>
</dbReference>
<dbReference type="GO" id="GO:0003161">
    <property type="term" value="P:cardiac conduction system development"/>
    <property type="evidence" value="ECO:0000316"/>
    <property type="project" value="MGI"/>
</dbReference>
<dbReference type="GO" id="GO:0003253">
    <property type="term" value="P:cardiac neural crest cell migration involved in outflow tract morphogenesis"/>
    <property type="evidence" value="ECO:0000315"/>
    <property type="project" value="MGI"/>
</dbReference>
<dbReference type="GO" id="GO:0034329">
    <property type="term" value="P:cell junction assembly"/>
    <property type="evidence" value="ECO:0000250"/>
    <property type="project" value="UniProtKB"/>
</dbReference>
<dbReference type="GO" id="GO:0098609">
    <property type="term" value="P:cell-cell adhesion"/>
    <property type="evidence" value="ECO:0000304"/>
    <property type="project" value="UniProtKB"/>
</dbReference>
<dbReference type="GO" id="GO:0071346">
    <property type="term" value="P:cellular response to type II interferon"/>
    <property type="evidence" value="ECO:0000314"/>
    <property type="project" value="MGI"/>
</dbReference>
<dbReference type="GO" id="GO:0036336">
    <property type="term" value="P:dendritic cell migration"/>
    <property type="evidence" value="ECO:0000316"/>
    <property type="project" value="MGI"/>
</dbReference>
<dbReference type="GO" id="GO:0060997">
    <property type="term" value="P:dendritic spine morphogenesis"/>
    <property type="evidence" value="ECO:0000315"/>
    <property type="project" value="UniProtKB"/>
</dbReference>
<dbReference type="GO" id="GO:0035050">
    <property type="term" value="P:embryonic heart tube development"/>
    <property type="evidence" value="ECO:0000315"/>
    <property type="project" value="MGI"/>
</dbReference>
<dbReference type="GO" id="GO:0006897">
    <property type="term" value="P:endocytosis"/>
    <property type="evidence" value="ECO:0000315"/>
    <property type="project" value="MGI"/>
</dbReference>
<dbReference type="GO" id="GO:0016197">
    <property type="term" value="P:endosomal transport"/>
    <property type="evidence" value="ECO:0000304"/>
    <property type="project" value="UniProtKB"/>
</dbReference>
<dbReference type="GO" id="GO:0086101">
    <property type="term" value="P:endothelin receptor signaling pathway involved in heart process"/>
    <property type="evidence" value="ECO:0000315"/>
    <property type="project" value="MGI"/>
</dbReference>
<dbReference type="GO" id="GO:0045198">
    <property type="term" value="P:establishment of epithelial cell apical/basal polarity"/>
    <property type="evidence" value="ECO:0000250"/>
    <property type="project" value="UniProtKB"/>
</dbReference>
<dbReference type="GO" id="GO:0051649">
    <property type="term" value="P:establishment of localization in cell"/>
    <property type="evidence" value="ECO:0000315"/>
    <property type="project" value="MGI"/>
</dbReference>
<dbReference type="GO" id="GO:0035088">
    <property type="term" value="P:establishment or maintenance of apical/basal cell polarity"/>
    <property type="evidence" value="ECO:0000315"/>
    <property type="project" value="MGI"/>
</dbReference>
<dbReference type="GO" id="GO:0007163">
    <property type="term" value="P:establishment or maintenance of cell polarity"/>
    <property type="evidence" value="ECO:0000304"/>
    <property type="project" value="UniProtKB"/>
</dbReference>
<dbReference type="GO" id="GO:0046847">
    <property type="term" value="P:filopodium assembly"/>
    <property type="evidence" value="ECO:0000314"/>
    <property type="project" value="MGI"/>
</dbReference>
<dbReference type="GO" id="GO:0060047">
    <property type="term" value="P:heart contraction"/>
    <property type="evidence" value="ECO:0000316"/>
    <property type="project" value="MGI"/>
</dbReference>
<dbReference type="GO" id="GO:0003015">
    <property type="term" value="P:heart process"/>
    <property type="evidence" value="ECO:0000315"/>
    <property type="project" value="MGI"/>
</dbReference>
<dbReference type="GO" id="GO:0007229">
    <property type="term" value="P:integrin-mediated signaling pathway"/>
    <property type="evidence" value="ECO:0007669"/>
    <property type="project" value="Ensembl"/>
</dbReference>
<dbReference type="GO" id="GO:0044788">
    <property type="term" value="P:modulation by host of viral process"/>
    <property type="evidence" value="ECO:0007669"/>
    <property type="project" value="Ensembl"/>
</dbReference>
<dbReference type="GO" id="GO:0031333">
    <property type="term" value="P:negative regulation of protein-containing complex assembly"/>
    <property type="evidence" value="ECO:0007669"/>
    <property type="project" value="Ensembl"/>
</dbReference>
<dbReference type="GO" id="GO:0048664">
    <property type="term" value="P:neuron fate determination"/>
    <property type="evidence" value="ECO:0000315"/>
    <property type="project" value="MGI"/>
</dbReference>
<dbReference type="GO" id="GO:0038189">
    <property type="term" value="P:neuropilin signaling pathway"/>
    <property type="evidence" value="ECO:0007669"/>
    <property type="project" value="Ensembl"/>
</dbReference>
<dbReference type="GO" id="GO:0007097">
    <property type="term" value="P:nuclear migration"/>
    <property type="evidence" value="ECO:0000315"/>
    <property type="project" value="MGI"/>
</dbReference>
<dbReference type="GO" id="GO:0051647">
    <property type="term" value="P:nucleus localization"/>
    <property type="evidence" value="ECO:0000315"/>
    <property type="project" value="MGI"/>
</dbReference>
<dbReference type="GO" id="GO:0006911">
    <property type="term" value="P:phagocytosis, engulfment"/>
    <property type="evidence" value="ECO:0000250"/>
    <property type="project" value="UniProtKB"/>
</dbReference>
<dbReference type="GO" id="GO:0030307">
    <property type="term" value="P:positive regulation of cell growth"/>
    <property type="evidence" value="ECO:0007669"/>
    <property type="project" value="Ensembl"/>
</dbReference>
<dbReference type="GO" id="GO:0030335">
    <property type="term" value="P:positive regulation of cell migration"/>
    <property type="evidence" value="ECO:0007669"/>
    <property type="project" value="Ensembl"/>
</dbReference>
<dbReference type="GO" id="GO:0032467">
    <property type="term" value="P:positive regulation of cytokinesis"/>
    <property type="evidence" value="ECO:0000250"/>
    <property type="project" value="UniProtKB"/>
</dbReference>
<dbReference type="GO" id="GO:0060501">
    <property type="term" value="P:positive regulation of epithelial cell proliferation involved in lung morphogenesis"/>
    <property type="evidence" value="ECO:0000315"/>
    <property type="project" value="CACAO"/>
</dbReference>
<dbReference type="GO" id="GO:0051491">
    <property type="term" value="P:positive regulation of filopodium assembly"/>
    <property type="evidence" value="ECO:0000315"/>
    <property type="project" value="UniProtKB"/>
</dbReference>
<dbReference type="GO" id="GO:0010592">
    <property type="term" value="P:positive regulation of lamellipodium assembly"/>
    <property type="evidence" value="ECO:0007669"/>
    <property type="project" value="Ensembl"/>
</dbReference>
<dbReference type="GO" id="GO:0043410">
    <property type="term" value="P:positive regulation of MAPK cascade"/>
    <property type="evidence" value="ECO:0000314"/>
    <property type="project" value="MGI"/>
</dbReference>
<dbReference type="GO" id="GO:0051897">
    <property type="term" value="P:positive regulation of phosphatidylinositol 3-kinase/protein kinase B signal transduction"/>
    <property type="evidence" value="ECO:0000315"/>
    <property type="project" value="MGI"/>
</dbReference>
<dbReference type="GO" id="GO:0048549">
    <property type="term" value="P:positive regulation of pinocytosis"/>
    <property type="evidence" value="ECO:0000315"/>
    <property type="project" value="UniProtKB"/>
</dbReference>
<dbReference type="GO" id="GO:0031274">
    <property type="term" value="P:positive regulation of pseudopodium assembly"/>
    <property type="evidence" value="ECO:0007669"/>
    <property type="project" value="Ensembl"/>
</dbReference>
<dbReference type="GO" id="GO:0051496">
    <property type="term" value="P:positive regulation of stress fiber assembly"/>
    <property type="evidence" value="ECO:0007669"/>
    <property type="project" value="Ensembl"/>
</dbReference>
<dbReference type="GO" id="GO:1900026">
    <property type="term" value="P:positive regulation of substrate adhesion-dependent cell spreading"/>
    <property type="evidence" value="ECO:0000250"/>
    <property type="project" value="UniProtKB"/>
</dbReference>
<dbReference type="GO" id="GO:0008104">
    <property type="term" value="P:protein localization"/>
    <property type="evidence" value="ECO:0000315"/>
    <property type="project" value="MGI"/>
</dbReference>
<dbReference type="GO" id="GO:0051988">
    <property type="term" value="P:regulation of attachment of spindle microtubules to kinetochore"/>
    <property type="evidence" value="ECO:0000250"/>
    <property type="project" value="UniProtKB"/>
</dbReference>
<dbReference type="GO" id="GO:0051489">
    <property type="term" value="P:regulation of filopodium assembly"/>
    <property type="evidence" value="ECO:0000250"/>
    <property type="project" value="UniProtKB"/>
</dbReference>
<dbReference type="GO" id="GO:0007088">
    <property type="term" value="P:regulation of mitotic nuclear division"/>
    <property type="evidence" value="ECO:0000315"/>
    <property type="project" value="MGI"/>
</dbReference>
<dbReference type="GO" id="GO:0099175">
    <property type="term" value="P:regulation of postsynapse organization"/>
    <property type="evidence" value="ECO:0000314"/>
    <property type="project" value="SynGO"/>
</dbReference>
<dbReference type="GO" id="GO:0007266">
    <property type="term" value="P:Rho protein signal transduction"/>
    <property type="evidence" value="ECO:0000304"/>
    <property type="project" value="MGI"/>
</dbReference>
<dbReference type="CDD" id="cd01874">
    <property type="entry name" value="Cdc42"/>
    <property type="match status" value="1"/>
</dbReference>
<dbReference type="FunFam" id="3.40.50.300:FF:000167">
    <property type="entry name" value="Cell division control protein 42 homolog"/>
    <property type="match status" value="1"/>
</dbReference>
<dbReference type="Gene3D" id="3.40.50.300">
    <property type="entry name" value="P-loop containing nucleotide triphosphate hydrolases"/>
    <property type="match status" value="1"/>
</dbReference>
<dbReference type="InterPro" id="IPR037874">
    <property type="entry name" value="Cdc42"/>
</dbReference>
<dbReference type="InterPro" id="IPR027417">
    <property type="entry name" value="P-loop_NTPase"/>
</dbReference>
<dbReference type="InterPro" id="IPR005225">
    <property type="entry name" value="Small_GTP-bd"/>
</dbReference>
<dbReference type="InterPro" id="IPR001806">
    <property type="entry name" value="Small_GTPase"/>
</dbReference>
<dbReference type="InterPro" id="IPR003578">
    <property type="entry name" value="Small_GTPase_Rho"/>
</dbReference>
<dbReference type="NCBIfam" id="TIGR00231">
    <property type="entry name" value="small_GTP"/>
    <property type="match status" value="1"/>
</dbReference>
<dbReference type="PANTHER" id="PTHR24072">
    <property type="entry name" value="RHO FAMILY GTPASE"/>
    <property type="match status" value="1"/>
</dbReference>
<dbReference type="Pfam" id="PF00071">
    <property type="entry name" value="Ras"/>
    <property type="match status" value="1"/>
</dbReference>
<dbReference type="PRINTS" id="PR00449">
    <property type="entry name" value="RASTRNSFRMNG"/>
</dbReference>
<dbReference type="SMART" id="SM00175">
    <property type="entry name" value="RAB"/>
    <property type="match status" value="1"/>
</dbReference>
<dbReference type="SMART" id="SM00173">
    <property type="entry name" value="RAS"/>
    <property type="match status" value="1"/>
</dbReference>
<dbReference type="SMART" id="SM00174">
    <property type="entry name" value="RHO"/>
    <property type="match status" value="1"/>
</dbReference>
<dbReference type="SUPFAM" id="SSF52540">
    <property type="entry name" value="P-loop containing nucleoside triphosphate hydrolases"/>
    <property type="match status" value="1"/>
</dbReference>
<dbReference type="PROSITE" id="PS51420">
    <property type="entry name" value="RHO"/>
    <property type="match status" value="1"/>
</dbReference>
<feature type="chain" id="PRO_0000030427" description="Cell division control protein 42 homolog">
    <location>
        <begin position="1"/>
        <end position="188"/>
    </location>
</feature>
<feature type="propeptide" id="PRO_0000030428" description="Removed in mature form" evidence="1">
    <location>
        <begin position="189"/>
        <end position="191"/>
    </location>
</feature>
<feature type="short sequence motif" description="Effector region" evidence="4">
    <location>
        <begin position="32"/>
        <end position="40"/>
    </location>
</feature>
<feature type="binding site" evidence="1">
    <location>
        <begin position="10"/>
        <end position="17"/>
    </location>
    <ligand>
        <name>GTP</name>
        <dbReference type="ChEBI" id="CHEBI:37565"/>
    </ligand>
</feature>
<feature type="binding site" evidence="1">
    <location>
        <begin position="57"/>
        <end position="61"/>
    </location>
    <ligand>
        <name>GTP</name>
        <dbReference type="ChEBI" id="CHEBI:37565"/>
    </ligand>
</feature>
<feature type="binding site" evidence="1">
    <location>
        <begin position="115"/>
        <end position="118"/>
    </location>
    <ligand>
        <name>GTP</name>
        <dbReference type="ChEBI" id="CHEBI:37565"/>
    </ligand>
</feature>
<feature type="modified residue" description="Phosphotyrosine; by SRC" evidence="2">
    <location>
        <position position="64"/>
    </location>
</feature>
<feature type="modified residue" description="Cysteine methyl ester" evidence="1">
    <location>
        <position position="188"/>
    </location>
</feature>
<feature type="lipid moiety-binding region" description="S-geranylgeranyl cysteine" evidence="1">
    <location>
        <position position="188"/>
    </location>
</feature>
<feature type="splice variant" id="VSP_040585" description="In isoform 1." evidence="18">
    <original>K</original>
    <variation>R</variation>
    <location>
        <position position="163"/>
    </location>
</feature>
<feature type="splice variant" id="VSP_040586" description="In isoform 1." evidence="18">
    <original>PKKSRRCVLL</original>
    <variation>TQPKRKCCIF</variation>
    <location>
        <begin position="182"/>
        <end position="191"/>
    </location>
</feature>
<feature type="mutagenesis site" description="No effect on filopodia formation." evidence="12">
    <original>G</original>
    <variation>V</variation>
    <location>
        <position position="12"/>
    </location>
</feature>
<feature type="mutagenesis site" description="Constitutively inactivated. Abolishes interaction with PARD6 and DOCK11. Inhibits filopodia formation." evidence="6 9 12">
    <original>T</original>
    <variation>N</variation>
    <location>
        <position position="17"/>
    </location>
</feature>
<feature type="mutagenesis site" description="Constitutively activated. Enhances interaction with DOCK11." evidence="9">
    <original>Q</original>
    <variation>L</variation>
    <location>
        <position position="61"/>
    </location>
</feature>
<feature type="sequence conflict" description="In Ref. 4; BAC34669." evidence="18" ref="4">
    <original>N</original>
    <variation>D</variation>
    <location>
        <position position="26"/>
    </location>
</feature>
<feature type="sequence conflict" description="In Ref. 6; AAH64792." evidence="18" ref="6">
    <original>R</original>
    <variation>G</variation>
    <location>
        <position position="66"/>
    </location>
</feature>
<feature type="sequence conflict" description="In Ref. 4; BAE39489." evidence="18" ref="4">
    <original>V</original>
    <variation>I</variation>
    <location>
        <position position="85"/>
    </location>
</feature>
<feature type="sequence conflict" description="In Ref. 4; BAE40049." evidence="18" ref="4">
    <original>Q</original>
    <variation>K</variation>
    <location>
        <position position="116"/>
    </location>
</feature>
<feature type="sequence conflict" description="In Ref. 6; AAH64792." evidence="18" ref="6">
    <original>E</original>
    <variation>G</variation>
    <location>
        <position position="171"/>
    </location>
</feature>
<feature type="strand" evidence="23">
    <location>
        <begin position="3"/>
        <end position="9"/>
    </location>
</feature>
<feature type="helix" evidence="23">
    <location>
        <begin position="16"/>
        <end position="25"/>
    </location>
</feature>
<feature type="strand" evidence="23">
    <location>
        <begin position="36"/>
        <end position="46"/>
    </location>
</feature>
<feature type="strand" evidence="23">
    <location>
        <begin position="49"/>
        <end position="58"/>
    </location>
</feature>
<feature type="helix" evidence="23">
    <location>
        <begin position="62"/>
        <end position="64"/>
    </location>
</feature>
<feature type="turn" evidence="23">
    <location>
        <begin position="65"/>
        <end position="67"/>
    </location>
</feature>
<feature type="helix" evidence="23">
    <location>
        <begin position="68"/>
        <end position="71"/>
    </location>
</feature>
<feature type="strand" evidence="23">
    <location>
        <begin position="76"/>
        <end position="83"/>
    </location>
</feature>
<feature type="helix" evidence="23">
    <location>
        <begin position="87"/>
        <end position="95"/>
    </location>
</feature>
<feature type="helix" evidence="23">
    <location>
        <begin position="97"/>
        <end position="104"/>
    </location>
</feature>
<feature type="strand" evidence="23">
    <location>
        <begin position="110"/>
        <end position="115"/>
    </location>
</feature>
<feature type="helix" evidence="23">
    <location>
        <begin position="117"/>
        <end position="121"/>
    </location>
</feature>
<feature type="helix" evidence="23">
    <location>
        <begin position="123"/>
        <end position="131"/>
    </location>
</feature>
<feature type="helix" evidence="23">
    <location>
        <begin position="139"/>
        <end position="148"/>
    </location>
</feature>
<feature type="strand" evidence="23">
    <location>
        <begin position="154"/>
        <end position="156"/>
    </location>
</feature>
<feature type="turn" evidence="23">
    <location>
        <begin position="159"/>
        <end position="161"/>
    </location>
</feature>
<feature type="helix" evidence="23">
    <location>
        <begin position="165"/>
        <end position="177"/>
    </location>
</feature>
<feature type="strand" evidence="23">
    <location>
        <begin position="178"/>
        <end position="181"/>
    </location>
</feature>
<feature type="helix" evidence="23">
    <location>
        <begin position="183"/>
        <end position="186"/>
    </location>
</feature>
<sequence>MQTIKCVVVGDGAVGKTCLLISYTTNKFPSEYVPTVFDNYAVTVMIGGEPYTLGLFDTAGQEDYDRLRPLSYPQTDVFLVCFSVVSPSSFENVKEKWVPEITHHCPKTPFLLVGTQIDLRDDPSTIEKLAKNKQKPITPETAEKLARDLKAVKYVECSALTQKGLKNVFDEAILAALEPPEPKKSRRCVLL</sequence>
<name>CDC42_MOUSE</name>
<protein>
    <recommendedName>
        <fullName evidence="18">Cell division control protein 42 homolog</fullName>
        <ecNumber evidence="13 15">3.6.5.2</ecNumber>
    </recommendedName>
    <alternativeName>
        <fullName>G25K GTP-binding protein</fullName>
    </alternativeName>
</protein>
<accession>P60766</accession>
<accession>A2A9U6</accession>
<accession>P21181</accession>
<accession>P25763</accession>
<accession>Q3THZ7</accession>
<accession>Q3TJK6</accession>
<accession>Q545V0</accession>
<accession>Q6P201</accession>
<accession>Q8BQ51</accession>